<comment type="function">
    <text evidence="1">Probably forms a large homooligomer on which other magnetosome subunits assemble. Required for formation of functional magnetosomes from pre-existing vesicles.</text>
</comment>
<comment type="subunit">
    <text evidence="1 2">Forms round, 20 nm diameter complexes with a central cavity. Interacts with full-length Mms6 (By similarity). Probably binds MamC (By similarity).</text>
</comment>
<comment type="interaction">
    <interactant intactId="EBI-15851915">
        <id>P0DO20</id>
    </interactant>
    <interactant intactId="EBI-15851915">
        <id>P0DO20</id>
        <label>mamA</label>
    </interactant>
    <organismsDiffer>false</organismsDiffer>
    <experiments>6</experiments>
</comment>
<comment type="subcellular location">
    <subcellularLocation>
        <location evidence="4">Magnetosome membrane</location>
        <topology evidence="4">Peripheral membrane protein</topology>
    </subcellularLocation>
    <text evidence="1 4">Reversibly binds to magnetosomes (PubMed:16707673). Forms oligomers that cover the surface of the magnetosome (By similarity).</text>
</comment>
<comment type="miscellaneous">
    <text evidence="6">This bacteria makes magnetosomes of about 43 nm diameter containing magnetite (Fe(3)O(4)).</text>
</comment>
<comment type="similarity">
    <text evidence="6">Belongs to the magnetosome MamA family.</text>
</comment>
<feature type="chain" id="PRO_0000447734" description="Magnetosome protein MamA">
    <location>
        <begin position="1"/>
        <end position="217"/>
    </location>
</feature>
<feature type="repeat" description="TPR 1" evidence="1">
    <location>
        <begin position="12"/>
        <end position="44"/>
    </location>
</feature>
<feature type="repeat" description="TPR 2" evidence="3">
    <location>
        <begin position="46"/>
        <end position="79"/>
    </location>
</feature>
<feature type="repeat" description="TPR 3" evidence="3">
    <location>
        <begin position="80"/>
        <end position="113"/>
    </location>
</feature>
<feature type="repeat" description="TPR 4" evidence="3">
    <location>
        <begin position="114"/>
        <end position="147"/>
    </location>
</feature>
<feature type="repeat" description="TPR 5" evidence="3">
    <location>
        <begin position="148"/>
        <end position="181"/>
    </location>
</feature>
<feature type="repeat" description="TPR 6" evidence="3">
    <location>
        <begin position="182"/>
        <end position="215"/>
    </location>
</feature>
<gene>
    <name type="primary">mamA</name>
    <name evidence="5" type="synonym">mam22</name>
</gene>
<accession>P0DO20</accession>
<accession>Q50224</accession>
<name>MAMA_PARME</name>
<sequence>MSSKPSDILDEVTLYAHYGLSVAKKLGMNMVDAFRAAFSVNDDIRQVYYRDKGISHAKAGRYSQAVMLLEQVYDADAFDVDVALHLGIAYVKTGAVDRGTELLERSLADAPDNVKVATVLGLTYVQVQKYDLAVPLLIKVAEANPINFNVRFRLGVALDNLGRFDEAIDSFKIALGLRPNEGKVHRAIAFSYEQMGRHEEALPHFKKANELDEGASV</sequence>
<reference key="1">
    <citation type="journal article" date="1996" name="Gene">
        <title>Cloning and sequencing of a gene encoding a new member of the tetratricopeptide protein family from magnetosomes of Magnetospirillum magnetotacticum.</title>
        <authorList>
            <person name="Okuda Y."/>
            <person name="Denda K."/>
            <person name="Fukumori Y."/>
        </authorList>
    </citation>
    <scope>NUCLEOTIDE SEQUENCE [GENOMIC DNA]</scope>
    <source>
        <strain>ATCC 31632 / DSM 3856 / JCM 21281 / NBRC 15272 / NCIMB 12542 / MS-1</strain>
    </source>
</reference>
<reference key="2">
    <citation type="journal article" date="2006" name="J. Bacteriol.">
        <title>Spatial localizations of Mam22 and Mam12 in the magnetosomes of Magnetospirillum magnetotacticum.</title>
        <authorList>
            <person name="Taoka A."/>
            <person name="Asada R."/>
            <person name="Sasaki H."/>
            <person name="Anzawa K."/>
            <person name="Wu L.F."/>
            <person name="Fukumori Y."/>
        </authorList>
    </citation>
    <scope>SUBCELLULAR LOCATION</scope>
    <source>
        <strain>ATCC 31632 / DSM 3856 / JCM 21281 / NBRC 15272 / NCIMB 12542 / MS-1</strain>
    </source>
</reference>
<organism>
    <name type="scientific">Paramagnetospirillum magnetotacticum</name>
    <name type="common">Aquaspirillum magnetotacticum</name>
    <dbReference type="NCBI Taxonomy" id="188"/>
    <lineage>
        <taxon>Bacteria</taxon>
        <taxon>Pseudomonadati</taxon>
        <taxon>Pseudomonadota</taxon>
        <taxon>Alphaproteobacteria</taxon>
        <taxon>Rhodospirillales</taxon>
        <taxon>Magnetospirillaceae</taxon>
        <taxon>Paramagnetospirillum</taxon>
    </lineage>
</organism>
<evidence type="ECO:0000250" key="1">
    <source>
        <dbReference type="UniProtKB" id="Q2W8Q0"/>
    </source>
</evidence>
<evidence type="ECO:0000250" key="2">
    <source>
        <dbReference type="UniProtKB" id="Q93DY9"/>
    </source>
</evidence>
<evidence type="ECO:0000255" key="3">
    <source>
        <dbReference type="PROSITE-ProRule" id="PRU00339"/>
    </source>
</evidence>
<evidence type="ECO:0000269" key="4">
    <source>
    </source>
</evidence>
<evidence type="ECO:0000303" key="5">
    <source>
    </source>
</evidence>
<evidence type="ECO:0000305" key="6"/>
<protein>
    <recommendedName>
        <fullName evidence="6">Magnetosome protein MamA</fullName>
    </recommendedName>
</protein>
<dbReference type="EMBL" id="D82942">
    <property type="protein sequence ID" value="BAA11643.2"/>
    <property type="molecule type" value="Genomic_DNA"/>
</dbReference>
<dbReference type="SMR" id="P0DO20"/>
<dbReference type="DIP" id="DIP-59326N"/>
<dbReference type="GO" id="GO:0110143">
    <property type="term" value="C:magnetosome"/>
    <property type="evidence" value="ECO:0000314"/>
    <property type="project" value="UniProtKB"/>
</dbReference>
<dbReference type="GO" id="GO:0110146">
    <property type="term" value="C:magnetosome membrane"/>
    <property type="evidence" value="ECO:0007669"/>
    <property type="project" value="UniProtKB-SubCell"/>
</dbReference>
<dbReference type="GO" id="GO:0042802">
    <property type="term" value="F:identical protein binding"/>
    <property type="evidence" value="ECO:0000353"/>
    <property type="project" value="IntAct"/>
</dbReference>
<dbReference type="FunFam" id="1.25.40.10:FF:001005">
    <property type="entry name" value="Magnetosome protein MamA"/>
    <property type="match status" value="1"/>
</dbReference>
<dbReference type="Gene3D" id="1.25.40.10">
    <property type="entry name" value="Tetratricopeptide repeat domain"/>
    <property type="match status" value="1"/>
</dbReference>
<dbReference type="InterPro" id="IPR011990">
    <property type="entry name" value="TPR-like_helical_dom_sf"/>
</dbReference>
<dbReference type="InterPro" id="IPR019734">
    <property type="entry name" value="TPR_rpt"/>
</dbReference>
<dbReference type="InterPro" id="IPR050498">
    <property type="entry name" value="Ycf3"/>
</dbReference>
<dbReference type="NCBIfam" id="NF040959">
    <property type="entry name" value="MamA"/>
    <property type="match status" value="1"/>
</dbReference>
<dbReference type="PANTHER" id="PTHR44858">
    <property type="entry name" value="TETRATRICOPEPTIDE REPEAT PROTEIN 6"/>
    <property type="match status" value="1"/>
</dbReference>
<dbReference type="PANTHER" id="PTHR44858:SF1">
    <property type="entry name" value="UDP-N-ACETYLGLUCOSAMINE--PEPTIDE N-ACETYLGLUCOSAMINYLTRANSFERASE SPINDLY-RELATED"/>
    <property type="match status" value="1"/>
</dbReference>
<dbReference type="Pfam" id="PF13432">
    <property type="entry name" value="TPR_16"/>
    <property type="match status" value="1"/>
</dbReference>
<dbReference type="Pfam" id="PF14559">
    <property type="entry name" value="TPR_19"/>
    <property type="match status" value="1"/>
</dbReference>
<dbReference type="Pfam" id="PF13181">
    <property type="entry name" value="TPR_8"/>
    <property type="match status" value="1"/>
</dbReference>
<dbReference type="SMART" id="SM00028">
    <property type="entry name" value="TPR"/>
    <property type="match status" value="5"/>
</dbReference>
<dbReference type="SUPFAM" id="SSF48452">
    <property type="entry name" value="TPR-like"/>
    <property type="match status" value="1"/>
</dbReference>
<dbReference type="PROSITE" id="PS50005">
    <property type="entry name" value="TPR"/>
    <property type="match status" value="5"/>
</dbReference>
<dbReference type="PROSITE" id="PS50293">
    <property type="entry name" value="TPR_REGION"/>
    <property type="match status" value="1"/>
</dbReference>
<keyword id="KW-0091">Biomineralization</keyword>
<keyword id="KW-1281">Magnetosome</keyword>
<keyword id="KW-0472">Membrane</keyword>
<keyword id="KW-0677">Repeat</keyword>
<keyword id="KW-0802">TPR repeat</keyword>
<proteinExistence type="evidence at protein level"/>